<keyword id="KW-0010">Activator</keyword>
<keyword id="KW-0067">ATP-binding</keyword>
<keyword id="KW-0418">Kinase</keyword>
<keyword id="KW-0547">Nucleotide-binding</keyword>
<keyword id="KW-0539">Nucleus</keyword>
<keyword id="KW-1185">Reference proteome</keyword>
<keyword id="KW-0678">Repressor</keyword>
<keyword id="KW-0723">Serine/threonine-protein kinase</keyword>
<keyword id="KW-0804">Transcription</keyword>
<keyword id="KW-0805">Transcription regulation</keyword>
<keyword id="KW-0808">Transferase</keyword>
<evidence type="ECO:0000250" key="1"/>
<evidence type="ECO:0000250" key="2">
    <source>
        <dbReference type="UniProtKB" id="P49336"/>
    </source>
</evidence>
<evidence type="ECO:0000255" key="3">
    <source>
        <dbReference type="PROSITE-ProRule" id="PRU00159"/>
    </source>
</evidence>
<evidence type="ECO:0000255" key="4">
    <source>
        <dbReference type="PROSITE-ProRule" id="PRU10027"/>
    </source>
</evidence>
<evidence type="ECO:0000256" key="5">
    <source>
        <dbReference type="SAM" id="MobiDB-lite"/>
    </source>
</evidence>
<evidence type="ECO:0000305" key="6"/>
<feature type="chain" id="PRO_0000312927" description="Cyclin-dependent kinase 8">
    <location>
        <begin position="1"/>
        <end position="416"/>
    </location>
</feature>
<feature type="domain" description="Protein kinase" evidence="3">
    <location>
        <begin position="21"/>
        <end position="287"/>
    </location>
</feature>
<feature type="region of interest" description="Interaction with CCNC" evidence="1">
    <location>
        <begin position="1"/>
        <end position="15"/>
    </location>
</feature>
<feature type="region of interest" description="Disordered" evidence="5">
    <location>
        <begin position="313"/>
        <end position="416"/>
    </location>
</feature>
<feature type="compositionally biased region" description="Low complexity" evidence="5">
    <location>
        <begin position="325"/>
        <end position="343"/>
    </location>
</feature>
<feature type="compositionally biased region" description="Polar residues" evidence="5">
    <location>
        <begin position="361"/>
        <end position="378"/>
    </location>
</feature>
<feature type="compositionally biased region" description="Polar residues" evidence="5">
    <location>
        <begin position="386"/>
        <end position="416"/>
    </location>
</feature>
<feature type="active site" description="Proton acceptor" evidence="3 4">
    <location>
        <position position="151"/>
    </location>
</feature>
<feature type="binding site" evidence="3">
    <location>
        <begin position="27"/>
        <end position="35"/>
    </location>
    <ligand>
        <name>ATP</name>
        <dbReference type="ChEBI" id="CHEBI:30616"/>
    </ligand>
</feature>
<feature type="binding site" evidence="3">
    <location>
        <position position="52"/>
    </location>
    <ligand>
        <name>ATP</name>
        <dbReference type="ChEBI" id="CHEBI:30616"/>
    </ligand>
</feature>
<gene>
    <name type="primary">cdk8</name>
</gene>
<organism>
    <name type="scientific">Xenopus laevis</name>
    <name type="common">African clawed frog</name>
    <dbReference type="NCBI Taxonomy" id="8355"/>
    <lineage>
        <taxon>Eukaryota</taxon>
        <taxon>Metazoa</taxon>
        <taxon>Chordata</taxon>
        <taxon>Craniata</taxon>
        <taxon>Vertebrata</taxon>
        <taxon>Euteleostomi</taxon>
        <taxon>Amphibia</taxon>
        <taxon>Batrachia</taxon>
        <taxon>Anura</taxon>
        <taxon>Pipoidea</taxon>
        <taxon>Pipidae</taxon>
        <taxon>Xenopodinae</taxon>
        <taxon>Xenopus</taxon>
        <taxon>Xenopus</taxon>
    </lineage>
</organism>
<reference key="1">
    <citation type="submission" date="2004-08" db="EMBL/GenBank/DDBJ databases">
        <authorList>
            <consortium name="NIH - Xenopus Gene Collection (XGC) project"/>
        </authorList>
    </citation>
    <scope>NUCLEOTIDE SEQUENCE [LARGE SCALE MRNA]</scope>
    <source>
        <tissue>Kidney</tissue>
    </source>
</reference>
<sequence length="416" mass="47763">MDYDFKVKLTGERERVEDLFEYEGCKVGRGTYGHVYKAKRKDGKDDRDYALKQIEGTGISMSACREIALLRELKHPNVISLQKVFLSHADRKVWLLFDFAEHDLWHIIKFHRASKANKKPVQLPRGMVKSLLYQILDGIHYLHANWVLHRDLKPANILVMGEGPERGRVKIADMGFARLFNSPLKPLADLDPVVVTFWYRAPELLLGARHYTKAIDKDWEDIKKMPEHSTLIKDFRRNTYTNCSLIKYMEKHKVKPDSKTFHLLQKLLTMDPIKRISSEQAMQDPYFLEDPLPTSDVFAGCQIPYPKREFLTEEEPDDKGDKKNQQQQQGNNHTNGTGHPGNQDNSHAQGPPLKKVRVVPPTTTSGGLIMTSDYQRSNPHAAYQNPGPSTSQPQSSMGYTSTSQQPPQYSHQTHRY</sequence>
<name>CDK8_XENLA</name>
<dbReference type="EC" id="2.7.11.22"/>
<dbReference type="EC" id="2.7.11.23"/>
<dbReference type="EMBL" id="BC080386">
    <property type="protein sequence ID" value="AAH80386.1"/>
    <property type="molecule type" value="mRNA"/>
</dbReference>
<dbReference type="RefSeq" id="NP_001087585.1">
    <property type="nucleotide sequence ID" value="NM_001094116.1"/>
</dbReference>
<dbReference type="SMR" id="Q66KH9"/>
<dbReference type="BioGRID" id="104269">
    <property type="interactions" value="1"/>
</dbReference>
<dbReference type="IntAct" id="Q66KH9">
    <property type="interactions" value="1"/>
</dbReference>
<dbReference type="DNASU" id="447409"/>
<dbReference type="GeneID" id="447409"/>
<dbReference type="KEGG" id="xla:447409"/>
<dbReference type="AGR" id="Xenbase:XB-GENE-962272"/>
<dbReference type="CTD" id="447409"/>
<dbReference type="Xenbase" id="XB-GENE-962272">
    <property type="gene designation" value="cdk8.S"/>
</dbReference>
<dbReference type="OrthoDB" id="6284126at2759"/>
<dbReference type="Proteomes" id="UP000186698">
    <property type="component" value="Chromosome 2S"/>
</dbReference>
<dbReference type="Bgee" id="447409">
    <property type="expression patterns" value="Expressed in egg cell and 19 other cell types or tissues"/>
</dbReference>
<dbReference type="GO" id="GO:0005634">
    <property type="term" value="C:nucleus"/>
    <property type="evidence" value="ECO:0000318"/>
    <property type="project" value="GO_Central"/>
</dbReference>
<dbReference type="GO" id="GO:0005524">
    <property type="term" value="F:ATP binding"/>
    <property type="evidence" value="ECO:0007669"/>
    <property type="project" value="UniProtKB-KW"/>
</dbReference>
<dbReference type="GO" id="GO:0004693">
    <property type="term" value="F:cyclin-dependent protein serine/threonine kinase activity"/>
    <property type="evidence" value="ECO:0007669"/>
    <property type="project" value="UniProtKB-EC"/>
</dbReference>
<dbReference type="GO" id="GO:0004672">
    <property type="term" value="F:protein kinase activity"/>
    <property type="evidence" value="ECO:0000250"/>
    <property type="project" value="UniProtKB"/>
</dbReference>
<dbReference type="GO" id="GO:0106310">
    <property type="term" value="F:protein serine kinase activity"/>
    <property type="evidence" value="ECO:0007669"/>
    <property type="project" value="RHEA"/>
</dbReference>
<dbReference type="GO" id="GO:0004674">
    <property type="term" value="F:protein serine/threonine kinase activity"/>
    <property type="evidence" value="ECO:0000318"/>
    <property type="project" value="GO_Central"/>
</dbReference>
<dbReference type="GO" id="GO:0008353">
    <property type="term" value="F:RNA polymerase II CTD heptapeptide repeat kinase activity"/>
    <property type="evidence" value="ECO:0007669"/>
    <property type="project" value="UniProtKB-EC"/>
</dbReference>
<dbReference type="FunFam" id="3.30.200.20:FF:000122">
    <property type="entry name" value="cyclin-dependent kinase 8 isoform X1"/>
    <property type="match status" value="1"/>
</dbReference>
<dbReference type="Gene3D" id="3.30.200.20">
    <property type="entry name" value="Phosphorylase Kinase, domain 1"/>
    <property type="match status" value="1"/>
</dbReference>
<dbReference type="Gene3D" id="1.10.510.10">
    <property type="entry name" value="Transferase(Phosphotransferase) domain 1"/>
    <property type="match status" value="2"/>
</dbReference>
<dbReference type="InterPro" id="IPR050108">
    <property type="entry name" value="CDK"/>
</dbReference>
<dbReference type="InterPro" id="IPR011009">
    <property type="entry name" value="Kinase-like_dom_sf"/>
</dbReference>
<dbReference type="InterPro" id="IPR000719">
    <property type="entry name" value="Prot_kinase_dom"/>
</dbReference>
<dbReference type="InterPro" id="IPR017441">
    <property type="entry name" value="Protein_kinase_ATP_BS"/>
</dbReference>
<dbReference type="InterPro" id="IPR008271">
    <property type="entry name" value="Ser/Thr_kinase_AS"/>
</dbReference>
<dbReference type="PANTHER" id="PTHR24056">
    <property type="entry name" value="CELL DIVISION PROTEIN KINASE"/>
    <property type="match status" value="1"/>
</dbReference>
<dbReference type="PANTHER" id="PTHR24056:SF243">
    <property type="entry name" value="CYCLIN-DEPENDENT KINASE 8"/>
    <property type="match status" value="1"/>
</dbReference>
<dbReference type="Pfam" id="PF00069">
    <property type="entry name" value="Pkinase"/>
    <property type="match status" value="1"/>
</dbReference>
<dbReference type="SMART" id="SM00220">
    <property type="entry name" value="S_TKc"/>
    <property type="match status" value="1"/>
</dbReference>
<dbReference type="SUPFAM" id="SSF56112">
    <property type="entry name" value="Protein kinase-like (PK-like)"/>
    <property type="match status" value="1"/>
</dbReference>
<dbReference type="PROSITE" id="PS00107">
    <property type="entry name" value="PROTEIN_KINASE_ATP"/>
    <property type="match status" value="1"/>
</dbReference>
<dbReference type="PROSITE" id="PS50011">
    <property type="entry name" value="PROTEIN_KINASE_DOM"/>
    <property type="match status" value="1"/>
</dbReference>
<dbReference type="PROSITE" id="PS00108">
    <property type="entry name" value="PROTEIN_KINASE_ST"/>
    <property type="match status" value="1"/>
</dbReference>
<protein>
    <recommendedName>
        <fullName>Cyclin-dependent kinase 8</fullName>
        <ecNumber>2.7.11.22</ecNumber>
        <ecNumber>2.7.11.23</ecNumber>
    </recommendedName>
    <alternativeName>
        <fullName>Cell division protein kinase 8</fullName>
    </alternativeName>
    <alternativeName>
        <fullName>Mediator complex subunit cdk8</fullName>
    </alternativeName>
    <alternativeName>
        <fullName>Mediator of RNA polymerase II transcription subunit cdk8</fullName>
    </alternativeName>
</protein>
<accession>Q66KH9</accession>
<proteinExistence type="evidence at transcript level"/>
<comment type="function">
    <text evidence="2">Component of the Mediator complex, a coactivator involved in regulated gene transcription of nearly all RNA polymerase II-dependent genes. Mediator functions as a bridge to convey information from gene-specific regulatory proteins to the basal RNA polymerase II transcription machinery. Mediator is recruited to promoters by direct interactions with regulatory proteins and serves as a scaffold for the assembly of a functional pre-initiation complex with RNA polymerase II and the general transcription factors. Phosphorylates the CTD (C-terminal domain) of the large subunit of RNA polymerase II (RNAp II), which may inhibit the formation of a transcription initiation complex (By similarity).</text>
</comment>
<comment type="catalytic activity">
    <reaction>
        <text>L-seryl-[protein] + ATP = O-phospho-L-seryl-[protein] + ADP + H(+)</text>
        <dbReference type="Rhea" id="RHEA:17989"/>
        <dbReference type="Rhea" id="RHEA-COMP:9863"/>
        <dbReference type="Rhea" id="RHEA-COMP:11604"/>
        <dbReference type="ChEBI" id="CHEBI:15378"/>
        <dbReference type="ChEBI" id="CHEBI:29999"/>
        <dbReference type="ChEBI" id="CHEBI:30616"/>
        <dbReference type="ChEBI" id="CHEBI:83421"/>
        <dbReference type="ChEBI" id="CHEBI:456216"/>
        <dbReference type="EC" id="2.7.11.22"/>
    </reaction>
</comment>
<comment type="catalytic activity">
    <reaction>
        <text>L-threonyl-[protein] + ATP = O-phospho-L-threonyl-[protein] + ADP + H(+)</text>
        <dbReference type="Rhea" id="RHEA:46608"/>
        <dbReference type="Rhea" id="RHEA-COMP:11060"/>
        <dbReference type="Rhea" id="RHEA-COMP:11605"/>
        <dbReference type="ChEBI" id="CHEBI:15378"/>
        <dbReference type="ChEBI" id="CHEBI:30013"/>
        <dbReference type="ChEBI" id="CHEBI:30616"/>
        <dbReference type="ChEBI" id="CHEBI:61977"/>
        <dbReference type="ChEBI" id="CHEBI:456216"/>
        <dbReference type="EC" id="2.7.11.22"/>
    </reaction>
</comment>
<comment type="catalytic activity">
    <reaction>
        <text>[DNA-directed RNA polymerase] + ATP = phospho-[DNA-directed RNA polymerase] + ADP + H(+)</text>
        <dbReference type="Rhea" id="RHEA:10216"/>
        <dbReference type="Rhea" id="RHEA-COMP:11321"/>
        <dbReference type="Rhea" id="RHEA-COMP:11322"/>
        <dbReference type="ChEBI" id="CHEBI:15378"/>
        <dbReference type="ChEBI" id="CHEBI:30616"/>
        <dbReference type="ChEBI" id="CHEBI:43176"/>
        <dbReference type="ChEBI" id="CHEBI:68546"/>
        <dbReference type="ChEBI" id="CHEBI:456216"/>
        <dbReference type="EC" id="2.7.11.23"/>
    </reaction>
</comment>
<comment type="cofactor">
    <cofactor evidence="1">
        <name>Mg(2+)</name>
        <dbReference type="ChEBI" id="CHEBI:18420"/>
    </cofactor>
</comment>
<comment type="subunit">
    <text evidence="1">Component of the Mediator complex. Interacts with ccnc.</text>
</comment>
<comment type="subcellular location">
    <subcellularLocation>
        <location evidence="6">Nucleus</location>
    </subcellularLocation>
</comment>
<comment type="similarity">
    <text evidence="6">Belongs to the protein kinase superfamily. CMGC Ser/Thr protein kinase family. CDC2/CDKX subfamily.</text>
</comment>